<sequence length="160" mass="16956">MATFEGRFSDAAGLRVGIVVARFNDLVTAKLLSGCLDCLKRHGVDVSETSSQLDVAWVPGSFELPIVAQQMARCGQYQVLITLGAVIRGDTPHFDVVVAEASKGVAAVARDTSVPVIFGVLTTDTMQQALERAGIKSNLGWSYGLEALEMGSLMRALPSA</sequence>
<accession>Q3ANH6</accession>
<keyword id="KW-0686">Riboflavin biosynthesis</keyword>
<keyword id="KW-0808">Transferase</keyword>
<reference key="1">
    <citation type="submission" date="2005-07" db="EMBL/GenBank/DDBJ databases">
        <title>Complete sequence of Synechococcus sp. CC9605.</title>
        <authorList>
            <consortium name="US DOE Joint Genome Institute"/>
            <person name="Copeland A."/>
            <person name="Lucas S."/>
            <person name="Lapidus A."/>
            <person name="Barry K."/>
            <person name="Detter J.C."/>
            <person name="Glavina T."/>
            <person name="Hammon N."/>
            <person name="Israni S."/>
            <person name="Pitluck S."/>
            <person name="Schmutz J."/>
            <person name="Martinez M."/>
            <person name="Larimer F."/>
            <person name="Land M."/>
            <person name="Kyrpides N."/>
            <person name="Ivanova N."/>
            <person name="Richardson P."/>
        </authorList>
    </citation>
    <scope>NUCLEOTIDE SEQUENCE [LARGE SCALE GENOMIC DNA]</scope>
    <source>
        <strain>CC9605</strain>
    </source>
</reference>
<dbReference type="EC" id="2.5.1.78" evidence="1"/>
<dbReference type="EMBL" id="CP000110">
    <property type="protein sequence ID" value="ABB33856.1"/>
    <property type="molecule type" value="Genomic_DNA"/>
</dbReference>
<dbReference type="RefSeq" id="WP_011363116.1">
    <property type="nucleotide sequence ID" value="NC_007516.1"/>
</dbReference>
<dbReference type="SMR" id="Q3ANH6"/>
<dbReference type="STRING" id="110662.Syncc9605_0077"/>
<dbReference type="KEGG" id="syd:Syncc9605_0077"/>
<dbReference type="eggNOG" id="COG0054">
    <property type="taxonomic scope" value="Bacteria"/>
</dbReference>
<dbReference type="HOGENOM" id="CLU_089358_1_0_3"/>
<dbReference type="OrthoDB" id="9809709at2"/>
<dbReference type="UniPathway" id="UPA00275">
    <property type="reaction ID" value="UER00404"/>
</dbReference>
<dbReference type="GO" id="GO:0005829">
    <property type="term" value="C:cytosol"/>
    <property type="evidence" value="ECO:0007669"/>
    <property type="project" value="TreeGrafter"/>
</dbReference>
<dbReference type="GO" id="GO:0009349">
    <property type="term" value="C:riboflavin synthase complex"/>
    <property type="evidence" value="ECO:0007669"/>
    <property type="project" value="InterPro"/>
</dbReference>
<dbReference type="GO" id="GO:0000906">
    <property type="term" value="F:6,7-dimethyl-8-ribityllumazine synthase activity"/>
    <property type="evidence" value="ECO:0007669"/>
    <property type="project" value="UniProtKB-UniRule"/>
</dbReference>
<dbReference type="GO" id="GO:0009231">
    <property type="term" value="P:riboflavin biosynthetic process"/>
    <property type="evidence" value="ECO:0007669"/>
    <property type="project" value="UniProtKB-UniRule"/>
</dbReference>
<dbReference type="CDD" id="cd09209">
    <property type="entry name" value="Lumazine_synthase-I"/>
    <property type="match status" value="1"/>
</dbReference>
<dbReference type="Gene3D" id="3.40.50.960">
    <property type="entry name" value="Lumazine/riboflavin synthase"/>
    <property type="match status" value="1"/>
</dbReference>
<dbReference type="HAMAP" id="MF_00178">
    <property type="entry name" value="Lumazine_synth"/>
    <property type="match status" value="1"/>
</dbReference>
<dbReference type="InterPro" id="IPR034964">
    <property type="entry name" value="LS"/>
</dbReference>
<dbReference type="InterPro" id="IPR002180">
    <property type="entry name" value="LS/RS"/>
</dbReference>
<dbReference type="InterPro" id="IPR036467">
    <property type="entry name" value="LS/RS_sf"/>
</dbReference>
<dbReference type="NCBIfam" id="TIGR00114">
    <property type="entry name" value="lumazine-synth"/>
    <property type="match status" value="1"/>
</dbReference>
<dbReference type="PANTHER" id="PTHR21058:SF0">
    <property type="entry name" value="6,7-DIMETHYL-8-RIBITYLLUMAZINE SYNTHASE"/>
    <property type="match status" value="1"/>
</dbReference>
<dbReference type="PANTHER" id="PTHR21058">
    <property type="entry name" value="6,7-DIMETHYL-8-RIBITYLLUMAZINE SYNTHASE DMRL SYNTHASE LUMAZINE SYNTHASE"/>
    <property type="match status" value="1"/>
</dbReference>
<dbReference type="Pfam" id="PF00885">
    <property type="entry name" value="DMRL_synthase"/>
    <property type="match status" value="1"/>
</dbReference>
<dbReference type="SUPFAM" id="SSF52121">
    <property type="entry name" value="Lumazine synthase"/>
    <property type="match status" value="1"/>
</dbReference>
<gene>
    <name evidence="1" type="primary">ribH</name>
    <name type="ordered locus">Syncc9605_0077</name>
</gene>
<comment type="function">
    <text evidence="1">Catalyzes the formation of 6,7-dimethyl-8-ribityllumazine by condensation of 5-amino-6-(D-ribitylamino)uracil with 3,4-dihydroxy-2-butanone 4-phosphate. This is the penultimate step in the biosynthesis of riboflavin.</text>
</comment>
<comment type="catalytic activity">
    <reaction evidence="1">
        <text>(2S)-2-hydroxy-3-oxobutyl phosphate + 5-amino-6-(D-ribitylamino)uracil = 6,7-dimethyl-8-(1-D-ribityl)lumazine + phosphate + 2 H2O + H(+)</text>
        <dbReference type="Rhea" id="RHEA:26152"/>
        <dbReference type="ChEBI" id="CHEBI:15377"/>
        <dbReference type="ChEBI" id="CHEBI:15378"/>
        <dbReference type="ChEBI" id="CHEBI:15934"/>
        <dbReference type="ChEBI" id="CHEBI:43474"/>
        <dbReference type="ChEBI" id="CHEBI:58201"/>
        <dbReference type="ChEBI" id="CHEBI:58830"/>
        <dbReference type="EC" id="2.5.1.78"/>
    </reaction>
</comment>
<comment type="pathway">
    <text evidence="1">Cofactor biosynthesis; riboflavin biosynthesis; riboflavin from 2-hydroxy-3-oxobutyl phosphate and 5-amino-6-(D-ribitylamino)uracil: step 1/2.</text>
</comment>
<comment type="similarity">
    <text evidence="1">Belongs to the DMRL synthase family.</text>
</comment>
<evidence type="ECO:0000255" key="1">
    <source>
        <dbReference type="HAMAP-Rule" id="MF_00178"/>
    </source>
</evidence>
<feature type="chain" id="PRO_1000040537" description="6,7-dimethyl-8-ribityllumazine synthase">
    <location>
        <begin position="1"/>
        <end position="160"/>
    </location>
</feature>
<feature type="active site" description="Proton donor" evidence="1">
    <location>
        <position position="93"/>
    </location>
</feature>
<feature type="binding site" evidence="1">
    <location>
        <position position="23"/>
    </location>
    <ligand>
        <name>5-amino-6-(D-ribitylamino)uracil</name>
        <dbReference type="ChEBI" id="CHEBI:15934"/>
    </ligand>
</feature>
<feature type="binding site" evidence="1">
    <location>
        <begin position="61"/>
        <end position="63"/>
    </location>
    <ligand>
        <name>5-amino-6-(D-ribitylamino)uracil</name>
        <dbReference type="ChEBI" id="CHEBI:15934"/>
    </ligand>
</feature>
<feature type="binding site" evidence="1">
    <location>
        <begin position="85"/>
        <end position="87"/>
    </location>
    <ligand>
        <name>5-amino-6-(D-ribitylamino)uracil</name>
        <dbReference type="ChEBI" id="CHEBI:15934"/>
    </ligand>
</feature>
<feature type="binding site" evidence="1">
    <location>
        <begin position="90"/>
        <end position="91"/>
    </location>
    <ligand>
        <name>(2S)-2-hydroxy-3-oxobutyl phosphate</name>
        <dbReference type="ChEBI" id="CHEBI:58830"/>
    </ligand>
</feature>
<feature type="binding site" evidence="1">
    <location>
        <position position="118"/>
    </location>
    <ligand>
        <name>5-amino-6-(D-ribitylamino)uracil</name>
        <dbReference type="ChEBI" id="CHEBI:15934"/>
    </ligand>
</feature>
<feature type="binding site" evidence="1">
    <location>
        <position position="132"/>
    </location>
    <ligand>
        <name>(2S)-2-hydroxy-3-oxobutyl phosphate</name>
        <dbReference type="ChEBI" id="CHEBI:58830"/>
    </ligand>
</feature>
<proteinExistence type="inferred from homology"/>
<organism>
    <name type="scientific">Synechococcus sp. (strain CC9605)</name>
    <dbReference type="NCBI Taxonomy" id="110662"/>
    <lineage>
        <taxon>Bacteria</taxon>
        <taxon>Bacillati</taxon>
        <taxon>Cyanobacteriota</taxon>
        <taxon>Cyanophyceae</taxon>
        <taxon>Synechococcales</taxon>
        <taxon>Synechococcaceae</taxon>
        <taxon>Synechococcus</taxon>
    </lineage>
</organism>
<protein>
    <recommendedName>
        <fullName evidence="1">6,7-dimethyl-8-ribityllumazine synthase</fullName>
        <shortName evidence="1">DMRL synthase</shortName>
        <shortName evidence="1">LS</shortName>
        <shortName evidence="1">Lumazine synthase</shortName>
        <ecNumber evidence="1">2.5.1.78</ecNumber>
    </recommendedName>
</protein>
<name>RISB_SYNSC</name>